<keyword id="KW-0002">3D-structure</keyword>
<keyword id="KW-0963">Cytoplasm</keyword>
<keyword id="KW-0378">Hydrolase</keyword>
<keyword id="KW-0539">Nucleus</keyword>
<keyword id="KW-0904">Protein phosphatase</keyword>
<keyword id="KW-1267">Proteomics identification</keyword>
<keyword id="KW-1185">Reference proteome</keyword>
<name>DUS29_HUMAN</name>
<protein>
    <recommendedName>
        <fullName evidence="9">Dual specificity phosphatase 29</fullName>
    </recommendedName>
    <alternativeName>
        <fullName evidence="6 7">Dual specificity phosphatase 27</fullName>
    </alternativeName>
    <alternativeName>
        <fullName evidence="8">Dual specificity phosphatase DUPD1</fullName>
        <ecNumber evidence="4">3.1.3.16</ecNumber>
        <ecNumber evidence="4">3.1.3.48</ecNumber>
    </alternativeName>
</protein>
<organism>
    <name type="scientific">Homo sapiens</name>
    <name type="common">Human</name>
    <dbReference type="NCBI Taxonomy" id="9606"/>
    <lineage>
        <taxon>Eukaryota</taxon>
        <taxon>Metazoa</taxon>
        <taxon>Chordata</taxon>
        <taxon>Craniata</taxon>
        <taxon>Vertebrata</taxon>
        <taxon>Euteleostomi</taxon>
        <taxon>Mammalia</taxon>
        <taxon>Eutheria</taxon>
        <taxon>Euarchontoglires</taxon>
        <taxon>Primates</taxon>
        <taxon>Haplorrhini</taxon>
        <taxon>Catarrhini</taxon>
        <taxon>Hominidae</taxon>
        <taxon>Homo</taxon>
    </lineage>
</organism>
<gene>
    <name evidence="9" type="primary">DUSP29</name>
    <name type="synonym">DUPD1</name>
    <name evidence="6 7" type="synonym">DUSP27</name>
</gene>
<comment type="function">
    <text evidence="1 4">Dual specificity phosphatase able to dephosphorylate phosphotyrosine, phosphoserine and phosphothreonine residues within the same substrate, with a preference for phosphotyrosine as a substrate (PubMed:17498703). Involved in the modulation of intracellular signaling cascades. In skeletal muscle regulates systemic glucose homeostasis by activating, AMPK, an energy sensor protein kinase (By similarity). Affects MAP kinase signaling though modulation of the MAPK1/2 cascade in skeletal muscle promoting muscle cell differentiation, development and atrophy (By similarity).</text>
</comment>
<comment type="catalytic activity">
    <reaction evidence="4">
        <text>O-phospho-L-tyrosyl-[protein] + H2O = L-tyrosyl-[protein] + phosphate</text>
        <dbReference type="Rhea" id="RHEA:10684"/>
        <dbReference type="Rhea" id="RHEA-COMP:10136"/>
        <dbReference type="Rhea" id="RHEA-COMP:20101"/>
        <dbReference type="ChEBI" id="CHEBI:15377"/>
        <dbReference type="ChEBI" id="CHEBI:43474"/>
        <dbReference type="ChEBI" id="CHEBI:46858"/>
        <dbReference type="ChEBI" id="CHEBI:61978"/>
        <dbReference type="EC" id="3.1.3.48"/>
    </reaction>
</comment>
<comment type="catalytic activity">
    <reaction evidence="4">
        <text>O-phospho-L-seryl-[protein] + H2O = L-seryl-[protein] + phosphate</text>
        <dbReference type="Rhea" id="RHEA:20629"/>
        <dbReference type="Rhea" id="RHEA-COMP:9863"/>
        <dbReference type="Rhea" id="RHEA-COMP:11604"/>
        <dbReference type="ChEBI" id="CHEBI:15377"/>
        <dbReference type="ChEBI" id="CHEBI:29999"/>
        <dbReference type="ChEBI" id="CHEBI:43474"/>
        <dbReference type="ChEBI" id="CHEBI:83421"/>
        <dbReference type="EC" id="3.1.3.16"/>
    </reaction>
</comment>
<comment type="catalytic activity">
    <reaction evidence="4">
        <text>O-phospho-L-threonyl-[protein] + H2O = L-threonyl-[protein] + phosphate</text>
        <dbReference type="Rhea" id="RHEA:47004"/>
        <dbReference type="Rhea" id="RHEA-COMP:11060"/>
        <dbReference type="Rhea" id="RHEA-COMP:11605"/>
        <dbReference type="ChEBI" id="CHEBI:15377"/>
        <dbReference type="ChEBI" id="CHEBI:30013"/>
        <dbReference type="ChEBI" id="CHEBI:43474"/>
        <dbReference type="ChEBI" id="CHEBI:61977"/>
        <dbReference type="EC" id="3.1.3.16"/>
    </reaction>
</comment>
<comment type="biophysicochemical properties">
    <kinetics>
        <KM evidence="4">1.02 mM for para-nitrophenylphosphate (at pH 5.5)</KM>
        <text evidence="4">kcat is 0.330 sec(-1) for para-nitrophenylphosphate.</text>
    </kinetics>
</comment>
<comment type="subunit">
    <text evidence="1 5">Homodimer (PubMed:21543850). Interacts with PRKAA2 (By similarity).</text>
</comment>
<comment type="interaction">
    <interactant intactId="EBI-1054321">
        <id>Q68J44</id>
    </interactant>
    <interactant intactId="EBI-351829">
        <id>O15145</id>
        <label>ARPC3</label>
    </interactant>
    <organismsDiffer>false</organismsDiffer>
    <experiments>3</experiments>
</comment>
<comment type="interaction">
    <interactant intactId="EBI-1054321">
        <id>Q68J44</id>
    </interactant>
    <interactant intactId="EBI-750475">
        <id>P45381</id>
        <label>ASPA</label>
    </interactant>
    <organismsDiffer>false</organismsDiffer>
    <experiments>3</experiments>
</comment>
<comment type="interaction">
    <interactant intactId="EBI-1054321">
        <id>Q68J44</id>
    </interactant>
    <interactant intactId="EBI-12954949">
        <id>Q9HAS0</id>
        <label>C17orf75</label>
    </interactant>
    <organismsDiffer>false</organismsDiffer>
    <experiments>3</experiments>
</comment>
<comment type="interaction">
    <interactant intactId="EBI-1054321">
        <id>Q68J44</id>
    </interactant>
    <interactant intactId="EBI-947360">
        <id>Q8N137</id>
        <label>CNTROB</label>
    </interactant>
    <organismsDiffer>false</organismsDiffer>
    <experiments>3</experiments>
</comment>
<comment type="interaction">
    <interactant intactId="EBI-1054321">
        <id>Q68J44</id>
    </interactant>
    <interactant intactId="EBI-742054">
        <id>Q96D03</id>
        <label>DDIT4L</label>
    </interactant>
    <organismsDiffer>false</organismsDiffer>
    <experiments>3</experiments>
</comment>
<comment type="interaction">
    <interactant intactId="EBI-1054321">
        <id>Q68J44</id>
    </interactant>
    <interactant intactId="EBI-11163335">
        <id>Q9NYA3</id>
        <label>GOLGA6A</label>
    </interactant>
    <organismsDiffer>false</organismsDiffer>
    <experiments>3</experiments>
</comment>
<comment type="interaction">
    <interactant intactId="EBI-1054321">
        <id>Q68J44</id>
    </interactant>
    <interactant intactId="EBI-739832">
        <id>Q8TBB1</id>
        <label>LNX1</label>
    </interactant>
    <organismsDiffer>false</organismsDiffer>
    <experiments>5</experiments>
</comment>
<comment type="interaction">
    <interactant intactId="EBI-1054321">
        <id>Q68J44</id>
    </interactant>
    <interactant intactId="EBI-740897">
        <id>Q9GZT8</id>
        <label>NIF3L1</label>
    </interactant>
    <organismsDiffer>false</organismsDiffer>
    <experiments>3</experiments>
</comment>
<comment type="interaction">
    <interactant intactId="EBI-1054321">
        <id>Q68J44</id>
    </interactant>
    <interactant intactId="EBI-395927">
        <id>Q9BVI4</id>
        <label>NOC4L</label>
    </interactant>
    <organismsDiffer>false</organismsDiffer>
    <experiments>3</experiments>
</comment>
<comment type="interaction">
    <interactant intactId="EBI-1054321">
        <id>Q68J44</id>
    </interactant>
    <interactant intactId="EBI-79165">
        <id>Q9NRD5</id>
        <label>PICK1</label>
    </interactant>
    <organismsDiffer>false</organismsDiffer>
    <experiments>3</experiments>
</comment>
<comment type="interaction">
    <interactant intactId="EBI-1054321">
        <id>Q68J44</id>
    </interactant>
    <interactant intactId="EBI-347928">
        <id>P62487</id>
        <label>POLR2G</label>
    </interactant>
    <organismsDiffer>false</organismsDiffer>
    <experiments>3</experiments>
</comment>
<comment type="interaction">
    <interactant intactId="EBI-1054321">
        <id>Q68J44</id>
    </interactant>
    <interactant intactId="EBI-357828">
        <id>P28074</id>
        <label>PSMB5</label>
    </interactant>
    <organismsDiffer>false</organismsDiffer>
    <experiments>3</experiments>
</comment>
<comment type="interaction">
    <interactant intactId="EBI-1054321">
        <id>Q68J44</id>
    </interactant>
    <interactant intactId="EBI-744408">
        <id>O75150</id>
        <label>RNF40</label>
    </interactant>
    <organismsDiffer>false</organismsDiffer>
    <experiments>3</experiments>
</comment>
<comment type="interaction">
    <interactant intactId="EBI-1054321">
        <id>Q68J44</id>
    </interactant>
    <interactant intactId="EBI-11975029">
        <id>Q05519-2</id>
        <label>SRSF11</label>
    </interactant>
    <organismsDiffer>false</organismsDiffer>
    <experiments>3</experiments>
</comment>
<comment type="interaction">
    <interactant intactId="EBI-1054321">
        <id>Q68J44</id>
    </interactant>
    <interactant intactId="EBI-714135">
        <id>O75558</id>
        <label>STX11</label>
    </interactant>
    <organismsDiffer>false</organismsDiffer>
    <experiments>3</experiments>
</comment>
<comment type="interaction">
    <interactant intactId="EBI-1054321">
        <id>Q68J44</id>
    </interactant>
    <interactant intactId="EBI-13636688">
        <id>P15884-3</id>
        <label>TCF4</label>
    </interactant>
    <organismsDiffer>false</organismsDiffer>
    <experiments>3</experiments>
</comment>
<comment type="interaction">
    <interactant intactId="EBI-1054321">
        <id>Q68J44</id>
    </interactant>
    <interactant intactId="EBI-11139477">
        <id>Q96N21</id>
        <label>TEPSIN</label>
    </interactant>
    <organismsDiffer>false</organismsDiffer>
    <experiments>3</experiments>
</comment>
<comment type="subcellular location">
    <subcellularLocation>
        <location evidence="4">Cytoplasm</location>
    </subcellularLocation>
    <subcellularLocation>
        <location evidence="1">Nucleus</location>
    </subcellularLocation>
</comment>
<comment type="similarity">
    <text evidence="8">Belongs to the protein-tyrosine phosphatase family. Non-receptor class dual specificity subfamily.</text>
</comment>
<evidence type="ECO:0000250" key="1">
    <source>
        <dbReference type="UniProtKB" id="Q8BK84"/>
    </source>
</evidence>
<evidence type="ECO:0000255" key="2">
    <source>
        <dbReference type="PROSITE-ProRule" id="PRU00160"/>
    </source>
</evidence>
<evidence type="ECO:0000256" key="3">
    <source>
        <dbReference type="SAM" id="MobiDB-lite"/>
    </source>
</evidence>
<evidence type="ECO:0000269" key="4">
    <source>
    </source>
</evidence>
<evidence type="ECO:0000269" key="5">
    <source>
    </source>
</evidence>
<evidence type="ECO:0000303" key="6">
    <source>
    </source>
</evidence>
<evidence type="ECO:0000303" key="7">
    <source>
    </source>
</evidence>
<evidence type="ECO:0000305" key="8"/>
<evidence type="ECO:0000312" key="9">
    <source>
        <dbReference type="HGNC" id="HGNC:23481"/>
    </source>
</evidence>
<evidence type="ECO:0007829" key="10">
    <source>
        <dbReference type="PDB" id="2Y96"/>
    </source>
</evidence>
<sequence length="220" mass="25336">MTSGEVKTSLKNAYSSAKRLSPKMEEEGEEEDYCTPGAFELERLFWKGSPQYTHVNEVWPKLYIGDEATALDRYRLQKAGFTHVLNAAHGRWNVDTGPDYYRDMDIQYHGVEADDLPTFDLSVFFYPAAAFIDRALSDDHSKILVHCVMGRSRSATLVLAYLMIHKDMTLVDAIQQVAKNRCVLPNRGFLKQLRELDKQLVQQRRRSQRQDGEEEDGREL</sequence>
<dbReference type="EC" id="3.1.3.16" evidence="4"/>
<dbReference type="EC" id="3.1.3.48" evidence="4"/>
<dbReference type="EMBL" id="AY686755">
    <property type="protein sequence ID" value="AAT94288.1"/>
    <property type="molecule type" value="mRNA"/>
</dbReference>
<dbReference type="EMBL" id="BC137321">
    <property type="protein sequence ID" value="AAI37322.1"/>
    <property type="molecule type" value="mRNA"/>
</dbReference>
<dbReference type="EMBL" id="BC137322">
    <property type="protein sequence ID" value="AAI37323.1"/>
    <property type="molecule type" value="mRNA"/>
</dbReference>
<dbReference type="CCDS" id="CCDS31223.1"/>
<dbReference type="RefSeq" id="NP_001003892.1">
    <property type="nucleotide sequence ID" value="NM_001003892.3"/>
</dbReference>
<dbReference type="RefSeq" id="NP_001371838.1">
    <property type="nucleotide sequence ID" value="NM_001384909.1"/>
</dbReference>
<dbReference type="RefSeq" id="XP_011538049.1">
    <property type="nucleotide sequence ID" value="XM_011539747.2"/>
</dbReference>
<dbReference type="PDB" id="2Y96">
    <property type="method" value="X-ray"/>
    <property type="resolution" value="2.38 A"/>
    <property type="chains" value="A/B=2-220"/>
</dbReference>
<dbReference type="PDBsum" id="2Y96"/>
<dbReference type="SMR" id="Q68J44"/>
<dbReference type="BioGRID" id="130766">
    <property type="interactions" value="40"/>
</dbReference>
<dbReference type="FunCoup" id="Q68J44">
    <property type="interactions" value="89"/>
</dbReference>
<dbReference type="IntAct" id="Q68J44">
    <property type="interactions" value="35"/>
</dbReference>
<dbReference type="MINT" id="Q68J44"/>
<dbReference type="STRING" id="9606.ENSP00000340609"/>
<dbReference type="DEPOD" id="DUPD1"/>
<dbReference type="GlyGen" id="Q68J44">
    <property type="glycosylation" value="1 site, 1 O-linked glycan (1 site)"/>
</dbReference>
<dbReference type="iPTMnet" id="Q68J44"/>
<dbReference type="PhosphoSitePlus" id="Q68J44"/>
<dbReference type="BioMuta" id="DUPD1"/>
<dbReference type="DMDM" id="74748317"/>
<dbReference type="MassIVE" id="Q68J44"/>
<dbReference type="PaxDb" id="9606-ENSP00000340609"/>
<dbReference type="PeptideAtlas" id="Q68J44"/>
<dbReference type="Antibodypedia" id="29633">
    <property type="antibodies" value="108 antibodies from 12 providers"/>
</dbReference>
<dbReference type="DNASU" id="338599"/>
<dbReference type="Ensembl" id="ENST00000338487.6">
    <property type="protein sequence ID" value="ENSP00000340609.5"/>
    <property type="gene ID" value="ENSG00000188716.6"/>
</dbReference>
<dbReference type="Ensembl" id="ENST00000625469.1">
    <property type="protein sequence ID" value="ENSP00000487404.1"/>
    <property type="gene ID" value="ENSG00000281660.1"/>
</dbReference>
<dbReference type="GeneID" id="338599"/>
<dbReference type="KEGG" id="hsa:338599"/>
<dbReference type="MANE-Select" id="ENST00000338487.6">
    <property type="protein sequence ID" value="ENSP00000340609.5"/>
    <property type="RefSeq nucleotide sequence ID" value="NM_001003892.3"/>
    <property type="RefSeq protein sequence ID" value="NP_001003892.1"/>
</dbReference>
<dbReference type="UCSC" id="uc001jwq.1">
    <property type="organism name" value="human"/>
</dbReference>
<dbReference type="AGR" id="HGNC:23481"/>
<dbReference type="CTD" id="338599"/>
<dbReference type="DisGeNET" id="338599"/>
<dbReference type="GeneCards" id="DUSP29"/>
<dbReference type="HGNC" id="HGNC:23481">
    <property type="gene designation" value="DUSP29"/>
</dbReference>
<dbReference type="HPA" id="ENSG00000188716">
    <property type="expression patterns" value="Tissue enriched (skeletal)"/>
</dbReference>
<dbReference type="MIM" id="618574">
    <property type="type" value="gene"/>
</dbReference>
<dbReference type="neXtProt" id="NX_Q68J44"/>
<dbReference type="OpenTargets" id="ENSG00000188716"/>
<dbReference type="VEuPathDB" id="HostDB:ENSG00000188716"/>
<dbReference type="eggNOG" id="KOG1716">
    <property type="taxonomic scope" value="Eukaryota"/>
</dbReference>
<dbReference type="GeneTree" id="ENSGT00940000160190"/>
<dbReference type="HOGENOM" id="CLU_027074_11_3_1"/>
<dbReference type="InParanoid" id="Q68J44"/>
<dbReference type="OMA" id="NAAHGQR"/>
<dbReference type="OrthoDB" id="10252009at2759"/>
<dbReference type="PAN-GO" id="Q68J44">
    <property type="GO annotations" value="4 GO annotations based on evolutionary models"/>
</dbReference>
<dbReference type="PhylomeDB" id="Q68J44"/>
<dbReference type="TreeFam" id="TF105128"/>
<dbReference type="PathwayCommons" id="Q68J44"/>
<dbReference type="SignaLink" id="Q68J44"/>
<dbReference type="BioGRID-ORCS" id="338599">
    <property type="hits" value="10 hits in 1160 CRISPR screens"/>
</dbReference>
<dbReference type="ChiTaRS" id="DUPD1">
    <property type="organism name" value="human"/>
</dbReference>
<dbReference type="EvolutionaryTrace" id="Q68J44"/>
<dbReference type="GenomeRNAi" id="338599"/>
<dbReference type="Pharos" id="Q68J44">
    <property type="development level" value="Tbio"/>
</dbReference>
<dbReference type="PRO" id="PR:Q68J44"/>
<dbReference type="Proteomes" id="UP000005640">
    <property type="component" value="Chromosome 10"/>
</dbReference>
<dbReference type="RNAct" id="Q68J44">
    <property type="molecule type" value="protein"/>
</dbReference>
<dbReference type="Bgee" id="ENSG00000188716">
    <property type="expression patterns" value="Expressed in hindlimb stylopod muscle and 40 other cell types or tissues"/>
</dbReference>
<dbReference type="GO" id="GO:0005737">
    <property type="term" value="C:cytoplasm"/>
    <property type="evidence" value="ECO:0000250"/>
    <property type="project" value="UniProtKB"/>
</dbReference>
<dbReference type="GO" id="GO:0005634">
    <property type="term" value="C:nucleus"/>
    <property type="evidence" value="ECO:0000250"/>
    <property type="project" value="UniProtKB"/>
</dbReference>
<dbReference type="GO" id="GO:0032991">
    <property type="term" value="C:protein-containing complex"/>
    <property type="evidence" value="ECO:0000314"/>
    <property type="project" value="UniProtKB"/>
</dbReference>
<dbReference type="GO" id="GO:0033549">
    <property type="term" value="F:MAP kinase phosphatase activity"/>
    <property type="evidence" value="ECO:0000250"/>
    <property type="project" value="UniProtKB"/>
</dbReference>
<dbReference type="GO" id="GO:0042803">
    <property type="term" value="F:protein homodimerization activity"/>
    <property type="evidence" value="ECO:0000314"/>
    <property type="project" value="UniProtKB"/>
</dbReference>
<dbReference type="GO" id="GO:0004722">
    <property type="term" value="F:protein serine/threonine phosphatase activity"/>
    <property type="evidence" value="ECO:0007669"/>
    <property type="project" value="UniProtKB-EC"/>
</dbReference>
<dbReference type="GO" id="GO:0004725">
    <property type="term" value="F:protein tyrosine phosphatase activity"/>
    <property type="evidence" value="ECO:0007669"/>
    <property type="project" value="UniProtKB-EC"/>
</dbReference>
<dbReference type="GO" id="GO:0008138">
    <property type="term" value="F:protein tyrosine/serine/threonine phosphatase activity"/>
    <property type="evidence" value="ECO:0000314"/>
    <property type="project" value="UniProtKB"/>
</dbReference>
<dbReference type="GO" id="GO:0042593">
    <property type="term" value="P:glucose homeostasis"/>
    <property type="evidence" value="ECO:0007669"/>
    <property type="project" value="Ensembl"/>
</dbReference>
<dbReference type="GO" id="GO:0042692">
    <property type="term" value="P:muscle cell differentiation"/>
    <property type="evidence" value="ECO:0000250"/>
    <property type="project" value="UniProtKB"/>
</dbReference>
<dbReference type="GO" id="GO:0070373">
    <property type="term" value="P:negative regulation of ERK1 and ERK2 cascade"/>
    <property type="evidence" value="ECO:0000250"/>
    <property type="project" value="UniProtKB"/>
</dbReference>
<dbReference type="GO" id="GO:0043409">
    <property type="term" value="P:negative regulation of MAPK cascade"/>
    <property type="evidence" value="ECO:0000318"/>
    <property type="project" value="GO_Central"/>
</dbReference>
<dbReference type="GO" id="GO:0006470">
    <property type="term" value="P:protein dephosphorylation"/>
    <property type="evidence" value="ECO:0000314"/>
    <property type="project" value="UniProtKB"/>
</dbReference>
<dbReference type="CDD" id="cd14575">
    <property type="entry name" value="DUPD1"/>
    <property type="match status" value="1"/>
</dbReference>
<dbReference type="FunFam" id="3.90.190.10:FF:000037">
    <property type="entry name" value="dual specificity protein phosphatase 26"/>
    <property type="match status" value="1"/>
</dbReference>
<dbReference type="Gene3D" id="3.90.190.10">
    <property type="entry name" value="Protein tyrosine phosphatase superfamily"/>
    <property type="match status" value="1"/>
</dbReference>
<dbReference type="InterPro" id="IPR020405">
    <property type="entry name" value="Atypical_DUSP_subfamA"/>
</dbReference>
<dbReference type="InterPro" id="IPR000340">
    <property type="entry name" value="Dual-sp_phosphatase_cat-dom"/>
</dbReference>
<dbReference type="InterPro" id="IPR029021">
    <property type="entry name" value="Prot-tyrosine_phosphatase-like"/>
</dbReference>
<dbReference type="InterPro" id="IPR016130">
    <property type="entry name" value="Tyr_Pase_AS"/>
</dbReference>
<dbReference type="InterPro" id="IPR000387">
    <property type="entry name" value="Tyr_Pase_dom"/>
</dbReference>
<dbReference type="InterPro" id="IPR020422">
    <property type="entry name" value="TYR_PHOSPHATASE_DUAL_dom"/>
</dbReference>
<dbReference type="PANTHER" id="PTHR45682">
    <property type="entry name" value="AGAP008228-PA"/>
    <property type="match status" value="1"/>
</dbReference>
<dbReference type="PANTHER" id="PTHR45682:SF6">
    <property type="entry name" value="DUAL SPECIFICITY PHOSPHATASE 29"/>
    <property type="match status" value="1"/>
</dbReference>
<dbReference type="Pfam" id="PF00782">
    <property type="entry name" value="DSPc"/>
    <property type="match status" value="1"/>
</dbReference>
<dbReference type="PRINTS" id="PR01908">
    <property type="entry name" value="ADSPHPHTASE"/>
</dbReference>
<dbReference type="PRINTS" id="PR01909">
    <property type="entry name" value="ADSPHPHTASEA"/>
</dbReference>
<dbReference type="SMART" id="SM00195">
    <property type="entry name" value="DSPc"/>
    <property type="match status" value="1"/>
</dbReference>
<dbReference type="SUPFAM" id="SSF52799">
    <property type="entry name" value="(Phosphotyrosine protein) phosphatases II"/>
    <property type="match status" value="1"/>
</dbReference>
<dbReference type="PROSITE" id="PS00383">
    <property type="entry name" value="TYR_PHOSPHATASE_1"/>
    <property type="match status" value="1"/>
</dbReference>
<dbReference type="PROSITE" id="PS50056">
    <property type="entry name" value="TYR_PHOSPHATASE_2"/>
    <property type="match status" value="1"/>
</dbReference>
<dbReference type="PROSITE" id="PS50054">
    <property type="entry name" value="TYR_PHOSPHATASE_DUAL"/>
    <property type="match status" value="1"/>
</dbReference>
<accession>Q68J44</accession>
<accession>B2RP93</accession>
<proteinExistence type="evidence at protein level"/>
<reference key="1">
    <citation type="journal article" date="2007" name="FEBS Lett.">
        <title>Identification and characterization of DUSP27, a novel dual-specific protein phosphatase.</title>
        <authorList>
            <person name="Friedberg I."/>
            <person name="Nika K."/>
            <person name="Tautz L."/>
            <person name="Saito K."/>
            <person name="Cerignoli F."/>
            <person name="Friedberg I."/>
            <person name="Godzik A."/>
            <person name="Mustelin T."/>
        </authorList>
    </citation>
    <scope>NUCLEOTIDE SEQUENCE [MRNA]</scope>
    <scope>FUNCTION</scope>
    <scope>SUBCELLULAR LOCATION</scope>
    <scope>BIOPHYSICOCHEMICAL PROPERTIES</scope>
    <scope>CATALYTIC ACTIVITY</scope>
</reference>
<reference key="2">
    <citation type="journal article" date="2004" name="Genome Res.">
        <title>The status, quality, and expansion of the NIH full-length cDNA project: the Mammalian Gene Collection (MGC).</title>
        <authorList>
            <consortium name="The MGC Project Team"/>
        </authorList>
    </citation>
    <scope>NUCLEOTIDE SEQUENCE [LARGE SCALE MRNA]</scope>
</reference>
<reference key="3">
    <citation type="journal article" date="2011" name="Acta Crystallogr. D">
        <title>Structure of human dual-specificity phosphatase 27 at 2.38 A resolution.</title>
        <authorList>
            <person name="Lountos G.T."/>
            <person name="Tropea J.E."/>
            <person name="Waugh D.S."/>
        </authorList>
    </citation>
    <scope>X-RAY CRYSTALLOGRAPHY (2.38 ANGSTROMS) IN COMPLEX WITH SULFATE</scope>
    <scope>SUBUNIT</scope>
</reference>
<feature type="chain" id="PRO_0000295877" description="Dual specificity phosphatase 29">
    <location>
        <begin position="1"/>
        <end position="220"/>
    </location>
</feature>
<feature type="domain" description="Tyrosine-protein phosphatase" evidence="2">
    <location>
        <begin position="54"/>
        <end position="202"/>
    </location>
</feature>
<feature type="region of interest" description="Disordered" evidence="3">
    <location>
        <begin position="1"/>
        <end position="29"/>
    </location>
</feature>
<feature type="compositionally biased region" description="Polar residues" evidence="3">
    <location>
        <begin position="1"/>
        <end position="15"/>
    </location>
</feature>
<feature type="active site" description="Phosphocysteine intermediate" evidence="2">
    <location>
        <position position="147"/>
    </location>
</feature>
<feature type="binding site" evidence="8">
    <location>
        <begin position="146"/>
        <end position="153"/>
    </location>
    <ligand>
        <name>substrate</name>
    </ligand>
</feature>
<feature type="sequence variant" id="VAR_051757" description="In dbSNP:rs11594934.">
    <original>D</original>
    <variation>N</variation>
    <location>
        <position position="66"/>
    </location>
</feature>
<feature type="sequence variant" id="VAR_033376" description="In dbSNP:rs16931938.">
    <original>S</original>
    <variation>R</variation>
    <location>
        <position position="137"/>
    </location>
</feature>
<feature type="helix" evidence="10">
    <location>
        <begin position="38"/>
        <end position="47"/>
    </location>
</feature>
<feature type="strand" evidence="10">
    <location>
        <begin position="54"/>
        <end position="59"/>
    </location>
</feature>
<feature type="strand" evidence="10">
    <location>
        <begin position="62"/>
        <end position="65"/>
    </location>
</feature>
<feature type="helix" evidence="10">
    <location>
        <begin position="67"/>
        <end position="71"/>
    </location>
</feature>
<feature type="helix" evidence="10">
    <location>
        <begin position="73"/>
        <end position="78"/>
    </location>
</feature>
<feature type="strand" evidence="10">
    <location>
        <begin position="83"/>
        <end position="86"/>
    </location>
</feature>
<feature type="helix" evidence="10">
    <location>
        <begin position="97"/>
        <end position="100"/>
    </location>
</feature>
<feature type="turn" evidence="10">
    <location>
        <begin position="101"/>
        <end position="103"/>
    </location>
</feature>
<feature type="strand" evidence="10">
    <location>
        <begin position="107"/>
        <end position="110"/>
    </location>
</feature>
<feature type="helix" evidence="10">
    <location>
        <begin position="121"/>
        <end position="124"/>
    </location>
</feature>
<feature type="helix" evidence="10">
    <location>
        <begin position="125"/>
        <end position="136"/>
    </location>
</feature>
<feature type="strand" evidence="10">
    <location>
        <begin position="143"/>
        <end position="146"/>
    </location>
</feature>
<feature type="strand" evidence="10">
    <location>
        <begin position="148"/>
        <end position="152"/>
    </location>
</feature>
<feature type="helix" evidence="10">
    <location>
        <begin position="153"/>
        <end position="165"/>
    </location>
</feature>
<feature type="helix" evidence="10">
    <location>
        <begin position="170"/>
        <end position="178"/>
    </location>
</feature>
<feature type="helix" evidence="10">
    <location>
        <begin position="187"/>
        <end position="205"/>
    </location>
</feature>